<sequence>MSQFPLSILKTSQPHHQPKSMNAPRSSDARGKRILIDPIDDRISKLPDDVLVMILASLSTEDALKTSVLSTRWKNVWKQVPYLHFDLLSATYESGLIAALSNSVAESITQVINNHNGHLMGCSIHHFAHHCVNGVLENWIRLLTLEKNTRFLSLCNKLGKGRRTNVLRFSPNTFSHPKLATLFLRRYDLVTAHAFKECENLKILKLEGILAEVDVFNTVIASCPSLKVLVLNCMWYNEKTCLKIHNNNLKVLHLDCPHVDCIDVSAALLDIFSIFYFAFAKEQNFVIKAPRLLFNNWTKDLEKVPNMNYNITSHAQEKKNIGHEFVVSGDASYLQKLKSLKVVVDVTNSREVHMLRDILVAWNGVLEELHILFKDNNVPNSKEDSESSIGGTQKKKWEEANLFPNADFRVEVMWMFDFNGSNKKQFALASRFVTQGTVMKKMMIKTSSFFANEKLDNEAVVAKLKELPKGNENLSIECF</sequence>
<feature type="chain" id="PRO_0000283350" description="Putative F-box protein At1g67390">
    <location>
        <begin position="1"/>
        <end position="479"/>
    </location>
</feature>
<feature type="domain" description="F-box" evidence="1">
    <location>
        <begin position="40"/>
        <end position="88"/>
    </location>
</feature>
<reference key="1">
    <citation type="journal article" date="2000" name="Nature">
        <title>Sequence and analysis of chromosome 1 of the plant Arabidopsis thaliana.</title>
        <authorList>
            <person name="Theologis A."/>
            <person name="Ecker J.R."/>
            <person name="Palm C.J."/>
            <person name="Federspiel N.A."/>
            <person name="Kaul S."/>
            <person name="White O."/>
            <person name="Alonso J."/>
            <person name="Altafi H."/>
            <person name="Araujo R."/>
            <person name="Bowman C.L."/>
            <person name="Brooks S.Y."/>
            <person name="Buehler E."/>
            <person name="Chan A."/>
            <person name="Chao Q."/>
            <person name="Chen H."/>
            <person name="Cheuk R.F."/>
            <person name="Chin C.W."/>
            <person name="Chung M.K."/>
            <person name="Conn L."/>
            <person name="Conway A.B."/>
            <person name="Conway A.R."/>
            <person name="Creasy T.H."/>
            <person name="Dewar K."/>
            <person name="Dunn P."/>
            <person name="Etgu P."/>
            <person name="Feldblyum T.V."/>
            <person name="Feng J.-D."/>
            <person name="Fong B."/>
            <person name="Fujii C.Y."/>
            <person name="Gill J.E."/>
            <person name="Goldsmith A.D."/>
            <person name="Haas B."/>
            <person name="Hansen N.F."/>
            <person name="Hughes B."/>
            <person name="Huizar L."/>
            <person name="Hunter J.L."/>
            <person name="Jenkins J."/>
            <person name="Johnson-Hopson C."/>
            <person name="Khan S."/>
            <person name="Khaykin E."/>
            <person name="Kim C.J."/>
            <person name="Koo H.L."/>
            <person name="Kremenetskaia I."/>
            <person name="Kurtz D.B."/>
            <person name="Kwan A."/>
            <person name="Lam B."/>
            <person name="Langin-Hooper S."/>
            <person name="Lee A."/>
            <person name="Lee J.M."/>
            <person name="Lenz C.A."/>
            <person name="Li J.H."/>
            <person name="Li Y.-P."/>
            <person name="Lin X."/>
            <person name="Liu S.X."/>
            <person name="Liu Z.A."/>
            <person name="Luros J.S."/>
            <person name="Maiti R."/>
            <person name="Marziali A."/>
            <person name="Militscher J."/>
            <person name="Miranda M."/>
            <person name="Nguyen M."/>
            <person name="Nierman W.C."/>
            <person name="Osborne B.I."/>
            <person name="Pai G."/>
            <person name="Peterson J."/>
            <person name="Pham P.K."/>
            <person name="Rizzo M."/>
            <person name="Rooney T."/>
            <person name="Rowley D."/>
            <person name="Sakano H."/>
            <person name="Salzberg S.L."/>
            <person name="Schwartz J.R."/>
            <person name="Shinn P."/>
            <person name="Southwick A.M."/>
            <person name="Sun H."/>
            <person name="Tallon L.J."/>
            <person name="Tambunga G."/>
            <person name="Toriumi M.J."/>
            <person name="Town C.D."/>
            <person name="Utterback T."/>
            <person name="Van Aken S."/>
            <person name="Vaysberg M."/>
            <person name="Vysotskaia V.S."/>
            <person name="Walker M."/>
            <person name="Wu D."/>
            <person name="Yu G."/>
            <person name="Fraser C.M."/>
            <person name="Venter J.C."/>
            <person name="Davis R.W."/>
        </authorList>
    </citation>
    <scope>NUCLEOTIDE SEQUENCE [LARGE SCALE GENOMIC DNA]</scope>
    <source>
        <strain>cv. Columbia</strain>
    </source>
</reference>
<reference key="2">
    <citation type="journal article" date="2017" name="Plant J.">
        <title>Araport11: a complete reannotation of the Arabidopsis thaliana reference genome.</title>
        <authorList>
            <person name="Cheng C.Y."/>
            <person name="Krishnakumar V."/>
            <person name="Chan A.P."/>
            <person name="Thibaud-Nissen F."/>
            <person name="Schobel S."/>
            <person name="Town C.D."/>
        </authorList>
    </citation>
    <scope>GENOME REANNOTATION</scope>
    <source>
        <strain>cv. Columbia</strain>
    </source>
</reference>
<keyword id="KW-1185">Reference proteome</keyword>
<name>FB77_ARATH</name>
<accession>Q9FYF4</accession>
<evidence type="ECO:0000255" key="1">
    <source>
        <dbReference type="PROSITE-ProRule" id="PRU00080"/>
    </source>
</evidence>
<proteinExistence type="predicted"/>
<organism>
    <name type="scientific">Arabidopsis thaliana</name>
    <name type="common">Mouse-ear cress</name>
    <dbReference type="NCBI Taxonomy" id="3702"/>
    <lineage>
        <taxon>Eukaryota</taxon>
        <taxon>Viridiplantae</taxon>
        <taxon>Streptophyta</taxon>
        <taxon>Embryophyta</taxon>
        <taxon>Tracheophyta</taxon>
        <taxon>Spermatophyta</taxon>
        <taxon>Magnoliopsida</taxon>
        <taxon>eudicotyledons</taxon>
        <taxon>Gunneridae</taxon>
        <taxon>Pentapetalae</taxon>
        <taxon>rosids</taxon>
        <taxon>malvids</taxon>
        <taxon>Brassicales</taxon>
        <taxon>Brassicaceae</taxon>
        <taxon>Camelineae</taxon>
        <taxon>Arabidopsis</taxon>
    </lineage>
</organism>
<protein>
    <recommendedName>
        <fullName>Putative F-box protein At1g67390</fullName>
    </recommendedName>
</protein>
<dbReference type="EMBL" id="AC002130">
    <property type="protein sequence ID" value="AAG00243.1"/>
    <property type="molecule type" value="Genomic_DNA"/>
</dbReference>
<dbReference type="EMBL" id="CP002684">
    <property type="protein sequence ID" value="AEE34639.1"/>
    <property type="molecule type" value="Genomic_DNA"/>
</dbReference>
<dbReference type="RefSeq" id="NP_176906.1">
    <property type="nucleotide sequence ID" value="NM_105406.2"/>
</dbReference>
<dbReference type="FunCoup" id="Q9FYF4">
    <property type="interactions" value="71"/>
</dbReference>
<dbReference type="PaxDb" id="3702-AT1G67390.1"/>
<dbReference type="EnsemblPlants" id="AT1G67390.1">
    <property type="protein sequence ID" value="AT1G67390.1"/>
    <property type="gene ID" value="AT1G67390"/>
</dbReference>
<dbReference type="GeneID" id="843059"/>
<dbReference type="Gramene" id="AT1G67390.1">
    <property type="protein sequence ID" value="AT1G67390.1"/>
    <property type="gene ID" value="AT1G67390"/>
</dbReference>
<dbReference type="KEGG" id="ath:AT1G67390"/>
<dbReference type="Araport" id="AT1G67390"/>
<dbReference type="TAIR" id="AT1G67390"/>
<dbReference type="eggNOG" id="ENOG502RZUA">
    <property type="taxonomic scope" value="Eukaryota"/>
</dbReference>
<dbReference type="HOGENOM" id="CLU_030531_0_0_1"/>
<dbReference type="InParanoid" id="Q9FYF4"/>
<dbReference type="OMA" id="HAFKECE"/>
<dbReference type="PhylomeDB" id="Q9FYF4"/>
<dbReference type="PRO" id="PR:Q9FYF4"/>
<dbReference type="Proteomes" id="UP000006548">
    <property type="component" value="Chromosome 1"/>
</dbReference>
<dbReference type="ExpressionAtlas" id="Q9FYF4">
    <property type="expression patterns" value="baseline"/>
</dbReference>
<dbReference type="CDD" id="cd22160">
    <property type="entry name" value="F-box_AtFBL13-like"/>
    <property type="match status" value="1"/>
</dbReference>
<dbReference type="Gene3D" id="3.80.10.10">
    <property type="entry name" value="Ribonuclease Inhibitor"/>
    <property type="match status" value="1"/>
</dbReference>
<dbReference type="InterPro" id="IPR036047">
    <property type="entry name" value="F-box-like_dom_sf"/>
</dbReference>
<dbReference type="InterPro" id="IPR053781">
    <property type="entry name" value="F-box_AtFBL13-like"/>
</dbReference>
<dbReference type="InterPro" id="IPR001810">
    <property type="entry name" value="F-box_dom"/>
</dbReference>
<dbReference type="InterPro" id="IPR044997">
    <property type="entry name" value="F-box_plant"/>
</dbReference>
<dbReference type="InterPro" id="IPR032675">
    <property type="entry name" value="LRR_dom_sf"/>
</dbReference>
<dbReference type="InterPro" id="IPR055411">
    <property type="entry name" value="LRR_FXL15/At3g58940/PEG3-like"/>
</dbReference>
<dbReference type="PANTHER" id="PTHR32153">
    <property type="entry name" value="OJ000223_09.16 PROTEIN"/>
    <property type="match status" value="1"/>
</dbReference>
<dbReference type="Pfam" id="PF00646">
    <property type="entry name" value="F-box"/>
    <property type="match status" value="1"/>
</dbReference>
<dbReference type="Pfam" id="PF24758">
    <property type="entry name" value="LRR_At5g56370"/>
    <property type="match status" value="1"/>
</dbReference>
<dbReference type="SMART" id="SM00256">
    <property type="entry name" value="FBOX"/>
    <property type="match status" value="1"/>
</dbReference>
<dbReference type="SUPFAM" id="SSF81383">
    <property type="entry name" value="F-box domain"/>
    <property type="match status" value="1"/>
</dbReference>
<dbReference type="SUPFAM" id="SSF52047">
    <property type="entry name" value="RNI-like"/>
    <property type="match status" value="1"/>
</dbReference>
<dbReference type="PROSITE" id="PS50181">
    <property type="entry name" value="FBOX"/>
    <property type="match status" value="1"/>
</dbReference>
<gene>
    <name type="ordered locus">At1g67390</name>
    <name type="ORF">F1N21.21</name>
</gene>